<accession>P59773</accession>
<accession>H3BM78</accession>
<evidence type="ECO:0000250" key="1">
    <source>
        <dbReference type="UniProtKB" id="F1QEA1"/>
    </source>
</evidence>
<evidence type="ECO:0000250" key="2">
    <source>
        <dbReference type="UniProtKB" id="Q8C4X7"/>
    </source>
</evidence>
<evidence type="ECO:0000255" key="3"/>
<evidence type="ECO:0000269" key="4">
    <source>
    </source>
</evidence>
<evidence type="ECO:0000269" key="5">
    <source>
    </source>
</evidence>
<evidence type="ECO:0000269" key="6">
    <source>
    </source>
</evidence>
<evidence type="ECO:0000303" key="7">
    <source>
    </source>
</evidence>
<evidence type="ECO:0000305" key="8"/>
<evidence type="ECO:0000305" key="9">
    <source>
    </source>
</evidence>
<evidence type="ECO:0000312" key="10">
    <source>
        <dbReference type="HGNC" id="HGNC:33914"/>
    </source>
</evidence>
<protein>
    <recommendedName>
        <fullName evidence="8">Major intrinsically disordered NOTCH2-binding receptor 1-like</fullName>
    </recommendedName>
    <alternativeName>
        <fullName evidence="7">Major intrinsically disordered NOTCH2-associated receptor 2</fullName>
    </alternativeName>
    <alternativeName>
        <fullName evidence="10">Membrane integral NOTCH2-associated receptor 2</fullName>
    </alternativeName>
</protein>
<gene>
    <name evidence="10" type="primary">MINAR2</name>
    <name evidence="10" type="synonym">KIAA1024L</name>
</gene>
<keyword id="KW-0209">Deafness</keyword>
<keyword id="KW-0225">Disease variant</keyword>
<keyword id="KW-0256">Endoplasmic reticulum</keyword>
<keyword id="KW-0325">Glycoprotein</keyword>
<keyword id="KW-0458">Lysosome</keyword>
<keyword id="KW-0472">Membrane</keyword>
<keyword id="KW-1010">Non-syndromic deafness</keyword>
<keyword id="KW-0597">Phosphoprotein</keyword>
<keyword id="KW-1185">Reference proteome</keyword>
<keyword id="KW-0812">Transmembrane</keyword>
<keyword id="KW-1133">Transmembrane helix</keyword>
<feature type="chain" id="PRO_0000157135" description="Major intrinsically disordered NOTCH2-binding receptor 1-like">
    <location>
        <begin position="1"/>
        <end position="190"/>
    </location>
</feature>
<feature type="transmembrane region" description="Helical" evidence="3">
    <location>
        <begin position="169"/>
        <end position="189"/>
    </location>
</feature>
<feature type="modified residue" description="Phosphoserine" evidence="2">
    <location>
        <position position="79"/>
    </location>
</feature>
<feature type="glycosylation site" description="N-linked (GlcNAc...) asparagine" evidence="3">
    <location>
        <position position="109"/>
    </location>
</feature>
<feature type="glycosylation site" description="N-linked (GlcNAc...) asparagine" evidence="3">
    <location>
        <position position="125"/>
    </location>
</feature>
<feature type="sequence variant" id="VAR_087627" description="In DFNB120; enhances angiogenesis; enhances MAPK signaling pathway." evidence="5">
    <location>
        <begin position="48"/>
        <end position="190"/>
    </location>
</feature>
<feature type="mutagenesis site" description="Compromises cholesterol recruitment to the perinuclear region; when associated with A-117." evidence="6">
    <original>W</original>
    <variation>A</variation>
    <location>
        <position position="112"/>
    </location>
</feature>
<feature type="mutagenesis site" description="Compromises cholesterol recruitment to the perinuclear region; when associated with A-112." evidence="6">
    <original>Y</original>
    <variation>A</variation>
    <location>
        <position position="117"/>
    </location>
</feature>
<name>MNARL_HUMAN</name>
<organism>
    <name type="scientific">Homo sapiens</name>
    <name type="common">Human</name>
    <dbReference type="NCBI Taxonomy" id="9606"/>
    <lineage>
        <taxon>Eukaryota</taxon>
        <taxon>Metazoa</taxon>
        <taxon>Chordata</taxon>
        <taxon>Craniata</taxon>
        <taxon>Vertebrata</taxon>
        <taxon>Euteleostomi</taxon>
        <taxon>Mammalia</taxon>
        <taxon>Eutheria</taxon>
        <taxon>Euarchontoglires</taxon>
        <taxon>Primates</taxon>
        <taxon>Haplorrhini</taxon>
        <taxon>Catarrhini</taxon>
        <taxon>Hominidae</taxon>
        <taxon>Homo</taxon>
    </lineage>
</organism>
<dbReference type="EMBL" id="AC008591">
    <property type="status" value="NOT_ANNOTATED_CDS"/>
    <property type="molecule type" value="Genomic_DNA"/>
</dbReference>
<dbReference type="EMBL" id="CH471062">
    <property type="protein sequence ID" value="EAW62380.1"/>
    <property type="molecule type" value="Genomic_DNA"/>
</dbReference>
<dbReference type="CCDS" id="CCDS58966.1"/>
<dbReference type="RefSeq" id="NP_001244237.1">
    <property type="nucleotide sequence ID" value="NM_001257308.2"/>
</dbReference>
<dbReference type="FunCoup" id="P59773">
    <property type="interactions" value="3"/>
</dbReference>
<dbReference type="STRING" id="9606.ENSP00000454268"/>
<dbReference type="GlyGen" id="P59773">
    <property type="glycosylation" value="2 sites"/>
</dbReference>
<dbReference type="iPTMnet" id="P59773"/>
<dbReference type="PhosphoSitePlus" id="P59773"/>
<dbReference type="BioMuta" id="KIAA1024L"/>
<dbReference type="DMDM" id="519668667"/>
<dbReference type="jPOST" id="P59773"/>
<dbReference type="MassIVE" id="P59773"/>
<dbReference type="PaxDb" id="9606-ENSP00000454268"/>
<dbReference type="Antibodypedia" id="2707">
    <property type="antibodies" value="6 antibodies from 6 providers"/>
</dbReference>
<dbReference type="DNASU" id="100127206"/>
<dbReference type="Ensembl" id="ENST00000564719.2">
    <property type="protein sequence ID" value="ENSP00000454268.1"/>
    <property type="gene ID" value="ENSG00000186367.7"/>
</dbReference>
<dbReference type="GeneID" id="100127206"/>
<dbReference type="KEGG" id="hsa:100127206"/>
<dbReference type="MANE-Select" id="ENST00000564719.2">
    <property type="protein sequence ID" value="ENSP00000454268.1"/>
    <property type="RefSeq nucleotide sequence ID" value="NM_001257308.2"/>
    <property type="RefSeq protein sequence ID" value="NP_001244237.1"/>
</dbReference>
<dbReference type="UCSC" id="uc031skx.2">
    <property type="organism name" value="human"/>
</dbReference>
<dbReference type="AGR" id="HGNC:33914"/>
<dbReference type="CTD" id="100127206"/>
<dbReference type="DisGeNET" id="100127206"/>
<dbReference type="GeneCards" id="MINAR2"/>
<dbReference type="HGNC" id="HGNC:33914">
    <property type="gene designation" value="MINAR2"/>
</dbReference>
<dbReference type="HPA" id="ENSG00000186367">
    <property type="expression patterns" value="Tissue enriched (skeletal)"/>
</dbReference>
<dbReference type="MalaCards" id="MINAR2"/>
<dbReference type="MIM" id="620215">
    <property type="type" value="gene"/>
</dbReference>
<dbReference type="MIM" id="620238">
    <property type="type" value="phenotype"/>
</dbReference>
<dbReference type="neXtProt" id="NX_P59773"/>
<dbReference type="OpenTargets" id="ENSG00000186367"/>
<dbReference type="Orphanet" id="90636">
    <property type="disease" value="Rare autosomal recessive non-syndromic sensorineural deafness type DFNB"/>
</dbReference>
<dbReference type="VEuPathDB" id="HostDB:ENSG00000186367"/>
<dbReference type="eggNOG" id="ENOG502RZQB">
    <property type="taxonomic scope" value="Eukaryota"/>
</dbReference>
<dbReference type="GeneTree" id="ENSGT00530000063851"/>
<dbReference type="HOGENOM" id="CLU_120056_0_0_1"/>
<dbReference type="InParanoid" id="P59773"/>
<dbReference type="OMA" id="ATHGMFQ"/>
<dbReference type="OrthoDB" id="8920945at2759"/>
<dbReference type="PAN-GO" id="P59773">
    <property type="GO annotations" value="0 GO annotations based on evolutionary models"/>
</dbReference>
<dbReference type="PathwayCommons" id="P59773"/>
<dbReference type="BioGRID-ORCS" id="100127206">
    <property type="hits" value="12 hits in 1131 CRISPR screens"/>
</dbReference>
<dbReference type="ChiTaRS" id="KIAA1024L">
    <property type="organism name" value="human"/>
</dbReference>
<dbReference type="Pharos" id="P59773">
    <property type="development level" value="Tdark"/>
</dbReference>
<dbReference type="PRO" id="PR:P59773"/>
<dbReference type="Proteomes" id="UP000005640">
    <property type="component" value="Chromosome 5"/>
</dbReference>
<dbReference type="RNAct" id="P59773">
    <property type="molecule type" value="protein"/>
</dbReference>
<dbReference type="Bgee" id="ENSG00000186367">
    <property type="expression patterns" value="Expressed in primordial germ cell in gonad and 18 other cell types or tissues"/>
</dbReference>
<dbReference type="GO" id="GO:0005783">
    <property type="term" value="C:endoplasmic reticulum"/>
    <property type="evidence" value="ECO:0000314"/>
    <property type="project" value="UniProtKB"/>
</dbReference>
<dbReference type="GO" id="GO:0005789">
    <property type="term" value="C:endoplasmic reticulum membrane"/>
    <property type="evidence" value="ECO:0007669"/>
    <property type="project" value="UniProtKB-SubCell"/>
</dbReference>
<dbReference type="GO" id="GO:0005765">
    <property type="term" value="C:lysosomal membrane"/>
    <property type="evidence" value="ECO:0000250"/>
    <property type="project" value="UniProtKB"/>
</dbReference>
<dbReference type="GO" id="GO:0032420">
    <property type="term" value="C:stereocilium"/>
    <property type="evidence" value="ECO:0007669"/>
    <property type="project" value="Ensembl"/>
</dbReference>
<dbReference type="GO" id="GO:0015485">
    <property type="term" value="F:cholesterol binding"/>
    <property type="evidence" value="ECO:0000314"/>
    <property type="project" value="UniProtKB"/>
</dbReference>
<dbReference type="GO" id="GO:0001525">
    <property type="term" value="P:angiogenesis"/>
    <property type="evidence" value="ECO:0000315"/>
    <property type="project" value="UniProtKB"/>
</dbReference>
<dbReference type="GO" id="GO:0042632">
    <property type="term" value="P:cholesterol homeostasis"/>
    <property type="evidence" value="ECO:0000250"/>
    <property type="project" value="UniProtKB"/>
</dbReference>
<dbReference type="GO" id="GO:0035640">
    <property type="term" value="P:exploration behavior"/>
    <property type="evidence" value="ECO:0007669"/>
    <property type="project" value="Ensembl"/>
</dbReference>
<dbReference type="GO" id="GO:0010467">
    <property type="term" value="P:gene expression"/>
    <property type="evidence" value="ECO:0007669"/>
    <property type="project" value="Ensembl"/>
</dbReference>
<dbReference type="GO" id="GO:0048873">
    <property type="term" value="P:homeostasis of number of cells within a tissue"/>
    <property type="evidence" value="ECO:0007669"/>
    <property type="project" value="Ensembl"/>
</dbReference>
<dbReference type="GO" id="GO:0042491">
    <property type="term" value="P:inner ear auditory receptor cell differentiation"/>
    <property type="evidence" value="ECO:0007669"/>
    <property type="project" value="Ensembl"/>
</dbReference>
<dbReference type="GO" id="GO:0060122">
    <property type="term" value="P:inner ear receptor cell stereocilium organization"/>
    <property type="evidence" value="ECO:0007669"/>
    <property type="project" value="Ensembl"/>
</dbReference>
<dbReference type="GO" id="GO:0051402">
    <property type="term" value="P:neuron apoptotic process"/>
    <property type="evidence" value="ECO:0007669"/>
    <property type="project" value="Ensembl"/>
</dbReference>
<dbReference type="GO" id="GO:0007605">
    <property type="term" value="P:sensory perception of sound"/>
    <property type="evidence" value="ECO:0007669"/>
    <property type="project" value="Ensembl"/>
</dbReference>
<dbReference type="GO" id="GO:0090659">
    <property type="term" value="P:walking behavior"/>
    <property type="evidence" value="ECO:0007669"/>
    <property type="project" value="Ensembl"/>
</dbReference>
<dbReference type="InterPro" id="IPR039706">
    <property type="entry name" value="MINAR1-like"/>
</dbReference>
<dbReference type="InterPro" id="IPR009626">
    <property type="entry name" value="MINAR1-like_C"/>
</dbReference>
<dbReference type="PANTHER" id="PTHR31530">
    <property type="entry name" value="MAJOR INTRINSICALLY DISORDERED NOTCH2-BINDING RECEPTOR 1 MINAR1 FAMILY MEMBER"/>
    <property type="match status" value="1"/>
</dbReference>
<dbReference type="PANTHER" id="PTHR31530:SF4">
    <property type="entry name" value="MAJOR INTRINSICALLY DISORDERED NOTCH2-BINDING RECEPTOR 1-LIKE"/>
    <property type="match status" value="1"/>
</dbReference>
<dbReference type="Pfam" id="PF06789">
    <property type="entry name" value="MINAR1_C"/>
    <property type="match status" value="1"/>
</dbReference>
<proteinExistence type="evidence at protein level"/>
<sequence>MDLSVLPNNNHPDKFLQLDVKSLTRSSALLQASLVRFPGGNYPAAQHWQNLVYSQREKKNIAAQRIRGSSADSLVTADSPPPSMSSVMKNNPLYGDLSLEEAMEERKKNPSWTIEEYDKHSLHTNLSGHLKENPNDLRFWLGDMYTPGFDTLLKKEEKQEKHSKFCRMGLILLVVISILVTIVTIITFFT</sequence>
<comment type="function">
    <text evidence="5 6">Binds cholesterol and may regulate the distribution and homeostasis of cholesterol in hair cells (PubMed:36317962). May play a role in angiogenesis (PubMed:35727972).</text>
</comment>
<comment type="subunit">
    <text evidence="4">Interacts with NOTCH2.</text>
</comment>
<comment type="subcellular location">
    <subcellularLocation>
        <location evidence="1">Lysosome membrane</location>
        <topology evidence="3">Single-pass membrane protein</topology>
    </subcellularLocation>
    <subcellularLocation>
        <location evidence="9">Endoplasmic reticulum membrane</location>
        <topology evidence="3">Single-pass membrane protein</topology>
    </subcellularLocation>
    <text evidence="1">Localizes to the stereocilia and the apical region of hair cell, apparently around and just below the cuticular plate (By similarity). Co-localized with cholesterol in the stereocilia (By similarity).</text>
</comment>
<comment type="tissue specificity">
    <text evidence="6">Highly expressed in the auditory hair cells.</text>
</comment>
<comment type="disease" evidence="5">
    <disease id="DI-06605">
        <name>Deafness, autosomal recessive, 120</name>
        <acronym>DFNB120</acronym>
        <description>A form of non-syndromic deafness characterized by congenital or prelingual onset of severe to profound sensorineural hearing loss. Sensorineural hearing loss results from damage to the neural receptors of the inner ear, the nerve pathways to the brain, or the area of the brain that receives sound information.</description>
        <dbReference type="MIM" id="620238"/>
    </disease>
    <text>The disease is caused by variants affecting the gene represented in this entry.</text>
</comment>
<comment type="similarity">
    <text evidence="8">Belongs to the MINAR family.</text>
</comment>
<reference key="1">
    <citation type="journal article" date="2004" name="Nature">
        <title>The DNA sequence and comparative analysis of human chromosome 5.</title>
        <authorList>
            <person name="Schmutz J."/>
            <person name="Martin J."/>
            <person name="Terry A."/>
            <person name="Couronne O."/>
            <person name="Grimwood J."/>
            <person name="Lowry S."/>
            <person name="Gordon L.A."/>
            <person name="Scott D."/>
            <person name="Xie G."/>
            <person name="Huang W."/>
            <person name="Hellsten U."/>
            <person name="Tran-Gyamfi M."/>
            <person name="She X."/>
            <person name="Prabhakar S."/>
            <person name="Aerts A."/>
            <person name="Altherr M."/>
            <person name="Bajorek E."/>
            <person name="Black S."/>
            <person name="Branscomb E."/>
            <person name="Caoile C."/>
            <person name="Challacombe J.F."/>
            <person name="Chan Y.M."/>
            <person name="Denys M."/>
            <person name="Detter J.C."/>
            <person name="Escobar J."/>
            <person name="Flowers D."/>
            <person name="Fotopulos D."/>
            <person name="Glavina T."/>
            <person name="Gomez M."/>
            <person name="Gonzales E."/>
            <person name="Goodstein D."/>
            <person name="Grigoriev I."/>
            <person name="Groza M."/>
            <person name="Hammon N."/>
            <person name="Hawkins T."/>
            <person name="Haydu L."/>
            <person name="Israni S."/>
            <person name="Jett J."/>
            <person name="Kadner K."/>
            <person name="Kimball H."/>
            <person name="Kobayashi A."/>
            <person name="Lopez F."/>
            <person name="Lou Y."/>
            <person name="Martinez D."/>
            <person name="Medina C."/>
            <person name="Morgan J."/>
            <person name="Nandkeshwar R."/>
            <person name="Noonan J.P."/>
            <person name="Pitluck S."/>
            <person name="Pollard M."/>
            <person name="Predki P."/>
            <person name="Priest J."/>
            <person name="Ramirez L."/>
            <person name="Retterer J."/>
            <person name="Rodriguez A."/>
            <person name="Rogers S."/>
            <person name="Salamov A."/>
            <person name="Salazar A."/>
            <person name="Thayer N."/>
            <person name="Tice H."/>
            <person name="Tsai M."/>
            <person name="Ustaszewska A."/>
            <person name="Vo N."/>
            <person name="Wheeler J."/>
            <person name="Wu K."/>
            <person name="Yang J."/>
            <person name="Dickson M."/>
            <person name="Cheng J.-F."/>
            <person name="Eichler E.E."/>
            <person name="Olsen A."/>
            <person name="Pennacchio L.A."/>
            <person name="Rokhsar D.S."/>
            <person name="Richardson P."/>
            <person name="Lucas S.M."/>
            <person name="Myers R.M."/>
            <person name="Rubin E.M."/>
        </authorList>
    </citation>
    <scope>NUCLEOTIDE SEQUENCE [LARGE SCALE GENOMIC DNA]</scope>
</reference>
<reference key="2">
    <citation type="submission" date="2005-09" db="EMBL/GenBank/DDBJ databases">
        <authorList>
            <person name="Mural R.J."/>
            <person name="Istrail S."/>
            <person name="Sutton G.G."/>
            <person name="Florea L."/>
            <person name="Halpern A.L."/>
            <person name="Mobarry C.M."/>
            <person name="Lippert R."/>
            <person name="Walenz B."/>
            <person name="Shatkay H."/>
            <person name="Dew I."/>
            <person name="Miller J.R."/>
            <person name="Flanigan M.J."/>
            <person name="Edwards N.J."/>
            <person name="Bolanos R."/>
            <person name="Fasulo D."/>
            <person name="Halldorsson B.V."/>
            <person name="Hannenhalli S."/>
            <person name="Turner R."/>
            <person name="Yooseph S."/>
            <person name="Lu F."/>
            <person name="Nusskern D.R."/>
            <person name="Shue B.C."/>
            <person name="Zheng X.H."/>
            <person name="Zhong F."/>
            <person name="Delcher A.L."/>
            <person name="Huson D.H."/>
            <person name="Kravitz S.A."/>
            <person name="Mouchard L."/>
            <person name="Reinert K."/>
            <person name="Remington K.A."/>
            <person name="Clark A.G."/>
            <person name="Waterman M.S."/>
            <person name="Eichler E.E."/>
            <person name="Adams M.D."/>
            <person name="Hunkapiller M.W."/>
            <person name="Myers E.W."/>
            <person name="Venter J.C."/>
        </authorList>
    </citation>
    <scope>NUCLEOTIDE SEQUENCE [LARGE SCALE GENOMIC DNA]</scope>
</reference>
<reference key="3">
    <citation type="journal article" date="2020" name="Brain Commun.">
        <title>Loss of MINAR2 impairs motor function and causes Parkinson's disease-like symptoms in mice.</title>
        <authorList>
            <person name="Ho R.X."/>
            <person name="Amraei R."/>
            <person name="De La Cena K.O.C."/>
            <person name="Sutherland E.G."/>
            <person name="Mortazavi F."/>
            <person name="Stein T."/>
            <person name="Chitalia V."/>
            <person name="Rahimi N."/>
        </authorList>
    </citation>
    <scope>INTERACTION WITH NOTCH2</scope>
    <scope>SUBCELLULAR LOCATION</scope>
</reference>
<reference key="4">
    <citation type="journal article" date="2022" name="Elife">
        <title>Kiaa1024L/Minar2 is essential for hearing by regulating cholesterol distribution in hair bundles.</title>
        <authorList>
            <person name="Gao G."/>
            <person name="Guo S."/>
            <person name="Zhang Q."/>
            <person name="Zhang H."/>
            <person name="Zhang C."/>
            <person name="Peng G."/>
        </authorList>
    </citation>
    <scope>FUNCTION</scope>
    <scope>TISSUE SPECIFICITY</scope>
    <scope>MUTAGENESIS OF TRP-112 AND TYR-117</scope>
</reference>
<reference key="5">
    <citation type="journal article" date="2022" name="Proc. Natl. Acad. Sci. U.S.A.">
        <title>Mutations in MINAR2 encoding membrane integral NOTCH2-associated receptor 2 cause deafness in humans and mice.</title>
        <authorList>
            <person name="Bademci G."/>
            <person name="Lachgar-Ruiz M."/>
            <person name="Deokar M."/>
            <person name="Zafeer M.F."/>
            <person name="Abad C."/>
            <person name="Yildirim Baylan M."/>
            <person name="Ingham N.J."/>
            <person name="Chen J."/>
            <person name="Sineni C.J."/>
            <person name="Vadgama N."/>
            <person name="Karakikes I."/>
            <person name="Guo S."/>
            <person name="Duman D."/>
            <person name="Singh N."/>
            <person name="Harlalka G."/>
            <person name="Jain S.P."/>
            <person name="Chioza B.A."/>
            <person name="Walz K."/>
            <person name="Steel K.P."/>
            <person name="Nasir J."/>
            <person name="Tekin M."/>
        </authorList>
    </citation>
    <scope>FUNCTION</scope>
    <scope>VARIANT DFNB120 48-TRP--THR-190 DEL</scope>
    <scope>CHARACTERIZATION OF VARIANT DFNB120 48-TRP--THR-190 DEL</scope>
</reference>